<keyword id="KW-0067">ATP-binding</keyword>
<keyword id="KW-0319">Glycerol metabolism</keyword>
<keyword id="KW-0418">Kinase</keyword>
<keyword id="KW-0547">Nucleotide-binding</keyword>
<keyword id="KW-0808">Transferase</keyword>
<gene>
    <name evidence="1" type="primary">glpK</name>
    <name type="ordered locus">ASA_2710</name>
</gene>
<proteinExistence type="inferred from homology"/>
<reference key="1">
    <citation type="journal article" date="2008" name="BMC Genomics">
        <title>The genome of Aeromonas salmonicida subsp. salmonicida A449: insights into the evolution of a fish pathogen.</title>
        <authorList>
            <person name="Reith M.E."/>
            <person name="Singh R.K."/>
            <person name="Curtis B."/>
            <person name="Boyd J.M."/>
            <person name="Bouevitch A."/>
            <person name="Kimball J."/>
            <person name="Munholland J."/>
            <person name="Murphy C."/>
            <person name="Sarty D."/>
            <person name="Williams J."/>
            <person name="Nash J.H."/>
            <person name="Johnson S.C."/>
            <person name="Brown L.L."/>
        </authorList>
    </citation>
    <scope>NUCLEOTIDE SEQUENCE [LARGE SCALE GENOMIC DNA]</scope>
    <source>
        <strain>A449</strain>
    </source>
</reference>
<comment type="function">
    <text evidence="1">Key enzyme in the regulation of glycerol uptake and metabolism. Catalyzes the phosphorylation of glycerol to yield sn-glycerol 3-phosphate.</text>
</comment>
<comment type="catalytic activity">
    <reaction evidence="1">
        <text>glycerol + ATP = sn-glycerol 3-phosphate + ADP + H(+)</text>
        <dbReference type="Rhea" id="RHEA:21644"/>
        <dbReference type="ChEBI" id="CHEBI:15378"/>
        <dbReference type="ChEBI" id="CHEBI:17754"/>
        <dbReference type="ChEBI" id="CHEBI:30616"/>
        <dbReference type="ChEBI" id="CHEBI:57597"/>
        <dbReference type="ChEBI" id="CHEBI:456216"/>
        <dbReference type="EC" id="2.7.1.30"/>
    </reaction>
</comment>
<comment type="activity regulation">
    <text evidence="1">Inhibited by fructose 1,6-bisphosphate (FBP).</text>
</comment>
<comment type="pathway">
    <text evidence="1">Polyol metabolism; glycerol degradation via glycerol kinase pathway; sn-glycerol 3-phosphate from glycerol: step 1/1.</text>
</comment>
<comment type="similarity">
    <text evidence="1">Belongs to the FGGY kinase family.</text>
</comment>
<evidence type="ECO:0000255" key="1">
    <source>
        <dbReference type="HAMAP-Rule" id="MF_00186"/>
    </source>
</evidence>
<accession>A4SPA7</accession>
<name>GLPK_AERS4</name>
<protein>
    <recommendedName>
        <fullName evidence="1">Glycerol kinase</fullName>
        <ecNumber evidence="1">2.7.1.30</ecNumber>
    </recommendedName>
    <alternativeName>
        <fullName evidence="1">ATP:glycerol 3-phosphotransferase</fullName>
    </alternativeName>
    <alternativeName>
        <fullName evidence="1">Glycerokinase</fullName>
        <shortName evidence="1">GK</shortName>
    </alternativeName>
</protein>
<feature type="chain" id="PRO_1000020694" description="Glycerol kinase">
    <location>
        <begin position="1"/>
        <end position="500"/>
    </location>
</feature>
<feature type="binding site" evidence="1">
    <location>
        <position position="15"/>
    </location>
    <ligand>
        <name>ADP</name>
        <dbReference type="ChEBI" id="CHEBI:456216"/>
    </ligand>
</feature>
<feature type="binding site" evidence="1">
    <location>
        <position position="15"/>
    </location>
    <ligand>
        <name>ATP</name>
        <dbReference type="ChEBI" id="CHEBI:30616"/>
    </ligand>
</feature>
<feature type="binding site" evidence="1">
    <location>
        <position position="15"/>
    </location>
    <ligand>
        <name>sn-glycerol 3-phosphate</name>
        <dbReference type="ChEBI" id="CHEBI:57597"/>
    </ligand>
</feature>
<feature type="binding site" evidence="1">
    <location>
        <position position="16"/>
    </location>
    <ligand>
        <name>ATP</name>
        <dbReference type="ChEBI" id="CHEBI:30616"/>
    </ligand>
</feature>
<feature type="binding site" evidence="1">
    <location>
        <position position="17"/>
    </location>
    <ligand>
        <name>ATP</name>
        <dbReference type="ChEBI" id="CHEBI:30616"/>
    </ligand>
</feature>
<feature type="binding site" evidence="1">
    <location>
        <position position="19"/>
    </location>
    <ligand>
        <name>ADP</name>
        <dbReference type="ChEBI" id="CHEBI:456216"/>
    </ligand>
</feature>
<feature type="binding site" evidence="1">
    <location>
        <position position="85"/>
    </location>
    <ligand>
        <name>glycerol</name>
        <dbReference type="ChEBI" id="CHEBI:17754"/>
    </ligand>
</feature>
<feature type="binding site" evidence="1">
    <location>
        <position position="85"/>
    </location>
    <ligand>
        <name>sn-glycerol 3-phosphate</name>
        <dbReference type="ChEBI" id="CHEBI:57597"/>
    </ligand>
</feature>
<feature type="binding site" evidence="1">
    <location>
        <position position="86"/>
    </location>
    <ligand>
        <name>glycerol</name>
        <dbReference type="ChEBI" id="CHEBI:17754"/>
    </ligand>
</feature>
<feature type="binding site" evidence="1">
    <location>
        <position position="86"/>
    </location>
    <ligand>
        <name>sn-glycerol 3-phosphate</name>
        <dbReference type="ChEBI" id="CHEBI:57597"/>
    </ligand>
</feature>
<feature type="binding site" evidence="1">
    <location>
        <position position="137"/>
    </location>
    <ligand>
        <name>glycerol</name>
        <dbReference type="ChEBI" id="CHEBI:17754"/>
    </ligand>
</feature>
<feature type="binding site" evidence="1">
    <location>
        <position position="137"/>
    </location>
    <ligand>
        <name>sn-glycerol 3-phosphate</name>
        <dbReference type="ChEBI" id="CHEBI:57597"/>
    </ligand>
</feature>
<feature type="binding site" evidence="1">
    <location>
        <position position="245"/>
    </location>
    <ligand>
        <name>glycerol</name>
        <dbReference type="ChEBI" id="CHEBI:17754"/>
    </ligand>
</feature>
<feature type="binding site" evidence="1">
    <location>
        <position position="245"/>
    </location>
    <ligand>
        <name>sn-glycerol 3-phosphate</name>
        <dbReference type="ChEBI" id="CHEBI:57597"/>
    </ligand>
</feature>
<feature type="binding site" evidence="1">
    <location>
        <position position="246"/>
    </location>
    <ligand>
        <name>glycerol</name>
        <dbReference type="ChEBI" id="CHEBI:17754"/>
    </ligand>
</feature>
<feature type="binding site" evidence="1">
    <location>
        <position position="267"/>
    </location>
    <ligand>
        <name>ADP</name>
        <dbReference type="ChEBI" id="CHEBI:456216"/>
    </ligand>
</feature>
<feature type="binding site" evidence="1">
    <location>
        <position position="267"/>
    </location>
    <ligand>
        <name>ATP</name>
        <dbReference type="ChEBI" id="CHEBI:30616"/>
    </ligand>
</feature>
<feature type="binding site" evidence="1">
    <location>
        <position position="310"/>
    </location>
    <ligand>
        <name>ADP</name>
        <dbReference type="ChEBI" id="CHEBI:456216"/>
    </ligand>
</feature>
<feature type="binding site" evidence="1">
    <location>
        <position position="310"/>
    </location>
    <ligand>
        <name>ATP</name>
        <dbReference type="ChEBI" id="CHEBI:30616"/>
    </ligand>
</feature>
<feature type="binding site" evidence="1">
    <location>
        <position position="314"/>
    </location>
    <ligand>
        <name>ATP</name>
        <dbReference type="ChEBI" id="CHEBI:30616"/>
    </ligand>
</feature>
<feature type="binding site" evidence="1">
    <location>
        <position position="411"/>
    </location>
    <ligand>
        <name>ADP</name>
        <dbReference type="ChEBI" id="CHEBI:456216"/>
    </ligand>
</feature>
<feature type="binding site" evidence="1">
    <location>
        <position position="411"/>
    </location>
    <ligand>
        <name>ATP</name>
        <dbReference type="ChEBI" id="CHEBI:30616"/>
    </ligand>
</feature>
<feature type="binding site" evidence="1">
    <location>
        <position position="415"/>
    </location>
    <ligand>
        <name>ADP</name>
        <dbReference type="ChEBI" id="CHEBI:456216"/>
    </ligand>
</feature>
<dbReference type="EC" id="2.7.1.30" evidence="1"/>
<dbReference type="EMBL" id="CP000644">
    <property type="protein sequence ID" value="ABO90729.1"/>
    <property type="molecule type" value="Genomic_DNA"/>
</dbReference>
<dbReference type="RefSeq" id="WP_005310059.1">
    <property type="nucleotide sequence ID" value="NC_009348.1"/>
</dbReference>
<dbReference type="SMR" id="A4SPA7"/>
<dbReference type="STRING" id="29491.GCA_000820065_00102"/>
<dbReference type="GeneID" id="92724023"/>
<dbReference type="KEGG" id="asa:ASA_2710"/>
<dbReference type="eggNOG" id="COG0554">
    <property type="taxonomic scope" value="Bacteria"/>
</dbReference>
<dbReference type="HOGENOM" id="CLU_009281_2_3_6"/>
<dbReference type="UniPathway" id="UPA00618">
    <property type="reaction ID" value="UER00672"/>
</dbReference>
<dbReference type="Proteomes" id="UP000000225">
    <property type="component" value="Chromosome"/>
</dbReference>
<dbReference type="GO" id="GO:0005829">
    <property type="term" value="C:cytosol"/>
    <property type="evidence" value="ECO:0007669"/>
    <property type="project" value="TreeGrafter"/>
</dbReference>
<dbReference type="GO" id="GO:0005524">
    <property type="term" value="F:ATP binding"/>
    <property type="evidence" value="ECO:0007669"/>
    <property type="project" value="UniProtKB-UniRule"/>
</dbReference>
<dbReference type="GO" id="GO:0004370">
    <property type="term" value="F:glycerol kinase activity"/>
    <property type="evidence" value="ECO:0000250"/>
    <property type="project" value="UniProtKB"/>
</dbReference>
<dbReference type="GO" id="GO:0019563">
    <property type="term" value="P:glycerol catabolic process"/>
    <property type="evidence" value="ECO:0007669"/>
    <property type="project" value="UniProtKB-UniRule"/>
</dbReference>
<dbReference type="GO" id="GO:0006071">
    <property type="term" value="P:glycerol metabolic process"/>
    <property type="evidence" value="ECO:0000250"/>
    <property type="project" value="UniProtKB"/>
</dbReference>
<dbReference type="GO" id="GO:0006072">
    <property type="term" value="P:glycerol-3-phosphate metabolic process"/>
    <property type="evidence" value="ECO:0007669"/>
    <property type="project" value="InterPro"/>
</dbReference>
<dbReference type="CDD" id="cd07786">
    <property type="entry name" value="FGGY_EcGK_like"/>
    <property type="match status" value="1"/>
</dbReference>
<dbReference type="FunFam" id="3.30.420.40:FF:000007">
    <property type="entry name" value="Glycerol kinase"/>
    <property type="match status" value="1"/>
</dbReference>
<dbReference type="FunFam" id="3.30.420.40:FF:000008">
    <property type="entry name" value="Glycerol kinase"/>
    <property type="match status" value="1"/>
</dbReference>
<dbReference type="Gene3D" id="3.30.420.40">
    <property type="match status" value="2"/>
</dbReference>
<dbReference type="HAMAP" id="MF_00186">
    <property type="entry name" value="Glycerol_kin"/>
    <property type="match status" value="1"/>
</dbReference>
<dbReference type="InterPro" id="IPR043129">
    <property type="entry name" value="ATPase_NBD"/>
</dbReference>
<dbReference type="InterPro" id="IPR000577">
    <property type="entry name" value="Carb_kinase_FGGY"/>
</dbReference>
<dbReference type="InterPro" id="IPR018483">
    <property type="entry name" value="Carb_kinase_FGGY_CS"/>
</dbReference>
<dbReference type="InterPro" id="IPR018485">
    <property type="entry name" value="FGGY_C"/>
</dbReference>
<dbReference type="InterPro" id="IPR018484">
    <property type="entry name" value="FGGY_N"/>
</dbReference>
<dbReference type="InterPro" id="IPR005999">
    <property type="entry name" value="Glycerol_kin"/>
</dbReference>
<dbReference type="NCBIfam" id="TIGR01311">
    <property type="entry name" value="glycerol_kin"/>
    <property type="match status" value="1"/>
</dbReference>
<dbReference type="NCBIfam" id="NF000756">
    <property type="entry name" value="PRK00047.1"/>
    <property type="match status" value="1"/>
</dbReference>
<dbReference type="PANTHER" id="PTHR10196:SF69">
    <property type="entry name" value="GLYCEROL KINASE"/>
    <property type="match status" value="1"/>
</dbReference>
<dbReference type="PANTHER" id="PTHR10196">
    <property type="entry name" value="SUGAR KINASE"/>
    <property type="match status" value="1"/>
</dbReference>
<dbReference type="Pfam" id="PF02782">
    <property type="entry name" value="FGGY_C"/>
    <property type="match status" value="1"/>
</dbReference>
<dbReference type="Pfam" id="PF00370">
    <property type="entry name" value="FGGY_N"/>
    <property type="match status" value="1"/>
</dbReference>
<dbReference type="PIRSF" id="PIRSF000538">
    <property type="entry name" value="GlpK"/>
    <property type="match status" value="1"/>
</dbReference>
<dbReference type="SUPFAM" id="SSF53067">
    <property type="entry name" value="Actin-like ATPase domain"/>
    <property type="match status" value="2"/>
</dbReference>
<dbReference type="PROSITE" id="PS00933">
    <property type="entry name" value="FGGY_KINASES_1"/>
    <property type="match status" value="1"/>
</dbReference>
<dbReference type="PROSITE" id="PS00445">
    <property type="entry name" value="FGGY_KINASES_2"/>
    <property type="match status" value="1"/>
</dbReference>
<organism>
    <name type="scientific">Aeromonas salmonicida (strain A449)</name>
    <dbReference type="NCBI Taxonomy" id="382245"/>
    <lineage>
        <taxon>Bacteria</taxon>
        <taxon>Pseudomonadati</taxon>
        <taxon>Pseudomonadota</taxon>
        <taxon>Gammaproteobacteria</taxon>
        <taxon>Aeromonadales</taxon>
        <taxon>Aeromonadaceae</taxon>
        <taxon>Aeromonas</taxon>
    </lineage>
</organism>
<sequence>MSAEKKYVVALDQGTTSSRAIVFDQDANIVGTSQREFTQHYPKAGWVEHDPMEIWATQSSVFTEVLAKTGLRSEEIAAIGITNQRETTVVWEKATGKPIYNAIVWQCRRTAAICEELKARGLEEYVRENTGLVLDAYFSGTKVKWILDNVEGAREKAMNGELLFGTIDTWLVWKMTNGEVHVTDPTNASRTMLYNIRDLKWDEKMLDELGIPLSMLPEVKPSSEVYGYTTRGGGSRIPIAGIAGDQQSALFGQLCFEKGMAKNTYGTGCFLLMNTGTEPVRSSNGLLTTVAIGPKGEVNYALEGAVFMGGATVQWLRDELKLIHDARDTDYFASKVGDTNGVYLVPAFVGLGAPYWDPYARGTMVGLTRGANRNHIIRAALESIAYQSRDVLDAMQQDSGIKLAALKVDGGAVANDFLMQFQSDMMHTPVVRPTRIETTAMGAAFLAGLAVGFWKSSDELEDKFSVDREFIPQMSHEERNKLYHGWQKAVERSRRWAEED</sequence>